<sequence>MLYLTKIRNAESEFTGNEQKIADFLRANVSELKSVSSRKMAKLLGISQSSIVKFAQKLGAQGFTELRMALIGEYSASREKTNATALHLHSSITSDDSLEVIARKLNREKELALEQTCALFDYARLQKIIEAISKAPFIQITGLGGSALVGRDLSFKLMKIGYRVACEADTHVQATVSQALKKGDVQIAISYSGSKKEIVLCAEAARKQGATVIAITSLTDSPLRRLAHFTLDTVSGETEWRSSSMSTRTAQNSVTDLLFVGLVQLNDVESLKMIERSSELTQRLK</sequence>
<dbReference type="EMBL" id="CU928163">
    <property type="protein sequence ID" value="CAR13926.1"/>
    <property type="molecule type" value="Genomic_DNA"/>
</dbReference>
<dbReference type="RefSeq" id="WP_000966447.1">
    <property type="nucleotide sequence ID" value="NC_011751.1"/>
</dbReference>
<dbReference type="RefSeq" id="YP_002413453.1">
    <property type="nucleotide sequence ID" value="NC_011751.1"/>
</dbReference>
<dbReference type="SMR" id="B7N617"/>
<dbReference type="STRING" id="585056.ECUMN_2748"/>
<dbReference type="KEGG" id="eum:ECUMN_2748"/>
<dbReference type="PATRIC" id="fig|585056.7.peg.2929"/>
<dbReference type="HOGENOM" id="CLU_055769_0_2_6"/>
<dbReference type="UniPathway" id="UPA00342"/>
<dbReference type="Proteomes" id="UP000007097">
    <property type="component" value="Chromosome"/>
</dbReference>
<dbReference type="GO" id="GO:0097367">
    <property type="term" value="F:carbohydrate derivative binding"/>
    <property type="evidence" value="ECO:0007669"/>
    <property type="project" value="InterPro"/>
</dbReference>
<dbReference type="GO" id="GO:0003677">
    <property type="term" value="F:DNA binding"/>
    <property type="evidence" value="ECO:0007669"/>
    <property type="project" value="UniProtKB-KW"/>
</dbReference>
<dbReference type="GO" id="GO:0003700">
    <property type="term" value="F:DNA-binding transcription factor activity"/>
    <property type="evidence" value="ECO:0007669"/>
    <property type="project" value="UniProtKB-UniRule"/>
</dbReference>
<dbReference type="GO" id="GO:1901135">
    <property type="term" value="P:carbohydrate derivative metabolic process"/>
    <property type="evidence" value="ECO:0007669"/>
    <property type="project" value="InterPro"/>
</dbReference>
<dbReference type="GO" id="GO:0097173">
    <property type="term" value="P:N-acetylmuramic acid catabolic process"/>
    <property type="evidence" value="ECO:0007669"/>
    <property type="project" value="UniProtKB-UniPathway"/>
</dbReference>
<dbReference type="GO" id="GO:0045892">
    <property type="term" value="P:negative regulation of DNA-templated transcription"/>
    <property type="evidence" value="ECO:0007669"/>
    <property type="project" value="UniProtKB-UniRule"/>
</dbReference>
<dbReference type="GO" id="GO:0043470">
    <property type="term" value="P:regulation of carbohydrate catabolic process"/>
    <property type="evidence" value="ECO:0007669"/>
    <property type="project" value="UniProtKB-UniRule"/>
</dbReference>
<dbReference type="CDD" id="cd05013">
    <property type="entry name" value="SIS_RpiR"/>
    <property type="match status" value="1"/>
</dbReference>
<dbReference type="FunFam" id="3.40.50.10490:FF:000028">
    <property type="entry name" value="HTH-type transcriptional regulator MurR"/>
    <property type="match status" value="1"/>
</dbReference>
<dbReference type="Gene3D" id="3.40.50.10490">
    <property type="entry name" value="Glucose-6-phosphate isomerase like protein, domain 1"/>
    <property type="match status" value="1"/>
</dbReference>
<dbReference type="Gene3D" id="1.10.10.10">
    <property type="entry name" value="Winged helix-like DNA-binding domain superfamily/Winged helix DNA-binding domain"/>
    <property type="match status" value="1"/>
</dbReference>
<dbReference type="HAMAP" id="MF_02108">
    <property type="entry name" value="HTH_type_MurR"/>
    <property type="match status" value="1"/>
</dbReference>
<dbReference type="InterPro" id="IPR009057">
    <property type="entry name" value="Homeodomain-like_sf"/>
</dbReference>
<dbReference type="InterPro" id="IPR000281">
    <property type="entry name" value="HTH_RpiR"/>
</dbReference>
<dbReference type="InterPro" id="IPR047640">
    <property type="entry name" value="RpiR-like"/>
</dbReference>
<dbReference type="InterPro" id="IPR035472">
    <property type="entry name" value="RpiR-like_SIS"/>
</dbReference>
<dbReference type="InterPro" id="IPR001347">
    <property type="entry name" value="SIS_dom"/>
</dbReference>
<dbReference type="InterPro" id="IPR046348">
    <property type="entry name" value="SIS_dom_sf"/>
</dbReference>
<dbReference type="InterPro" id="IPR022821">
    <property type="entry name" value="Tscrpt_reg_HTH_MurR"/>
</dbReference>
<dbReference type="InterPro" id="IPR036388">
    <property type="entry name" value="WH-like_DNA-bd_sf"/>
</dbReference>
<dbReference type="NCBIfam" id="NF012026">
    <property type="entry name" value="PRK15482.1"/>
    <property type="match status" value="1"/>
</dbReference>
<dbReference type="PANTHER" id="PTHR30514">
    <property type="entry name" value="GLUCOKINASE"/>
    <property type="match status" value="1"/>
</dbReference>
<dbReference type="PANTHER" id="PTHR30514:SF17">
    <property type="entry name" value="HTH-TYPE TRANSCRIPTIONAL REGULATOR MURR"/>
    <property type="match status" value="1"/>
</dbReference>
<dbReference type="Pfam" id="PF01418">
    <property type="entry name" value="HTH_6"/>
    <property type="match status" value="1"/>
</dbReference>
<dbReference type="Pfam" id="PF01380">
    <property type="entry name" value="SIS"/>
    <property type="match status" value="1"/>
</dbReference>
<dbReference type="SUPFAM" id="SSF46689">
    <property type="entry name" value="Homeodomain-like"/>
    <property type="match status" value="1"/>
</dbReference>
<dbReference type="SUPFAM" id="SSF53697">
    <property type="entry name" value="SIS domain"/>
    <property type="match status" value="1"/>
</dbReference>
<dbReference type="PROSITE" id="PS51071">
    <property type="entry name" value="HTH_RPIR"/>
    <property type="match status" value="1"/>
</dbReference>
<dbReference type="PROSITE" id="PS51464">
    <property type="entry name" value="SIS"/>
    <property type="match status" value="1"/>
</dbReference>
<protein>
    <recommendedName>
        <fullName evidence="1">HTH-type transcriptional regulator MurR</fullName>
    </recommendedName>
    <alternativeName>
        <fullName evidence="1">MurPQ operon repressor</fullName>
    </alternativeName>
</protein>
<comment type="function">
    <text evidence="1">Represses the expression of the murPQ operon involved in the uptake and degradation of N-acetylmuramic acid (MurNAc). Binds to two adjacent inverted repeats within the operator region. MurNAc 6-phosphate, the substrate of MurQ, is the specific inducer that weakens binding of MurR to the operator.</text>
</comment>
<comment type="pathway">
    <text>Amino-sugar metabolism; N-acetylmuramate degradation [regulation].</text>
</comment>
<comment type="subunit">
    <text evidence="1">Homotetramer.</text>
</comment>
<accession>B7N617</accession>
<organism>
    <name type="scientific">Escherichia coli O17:K52:H18 (strain UMN026 / ExPEC)</name>
    <dbReference type="NCBI Taxonomy" id="585056"/>
    <lineage>
        <taxon>Bacteria</taxon>
        <taxon>Pseudomonadati</taxon>
        <taxon>Pseudomonadota</taxon>
        <taxon>Gammaproteobacteria</taxon>
        <taxon>Enterobacterales</taxon>
        <taxon>Enterobacteriaceae</taxon>
        <taxon>Escherichia</taxon>
    </lineage>
</organism>
<keyword id="KW-0119">Carbohydrate metabolism</keyword>
<keyword id="KW-0238">DNA-binding</keyword>
<keyword id="KW-0678">Repressor</keyword>
<keyword id="KW-0804">Transcription</keyword>
<keyword id="KW-0805">Transcription regulation</keyword>
<name>MURR_ECOLU</name>
<feature type="chain" id="PRO_0000387765" description="HTH-type transcriptional regulator MurR">
    <location>
        <begin position="1"/>
        <end position="285"/>
    </location>
</feature>
<feature type="domain" description="HTH rpiR-type" evidence="1">
    <location>
        <begin position="1"/>
        <end position="77"/>
    </location>
</feature>
<feature type="domain" description="SIS" evidence="1">
    <location>
        <begin position="128"/>
        <end position="268"/>
    </location>
</feature>
<feature type="DNA-binding region" description="H-T-H motif" evidence="1">
    <location>
        <begin position="37"/>
        <end position="56"/>
    </location>
</feature>
<gene>
    <name evidence="1" type="primary">murR</name>
    <name type="ordered locus">ECUMN_2748</name>
</gene>
<proteinExistence type="inferred from homology"/>
<evidence type="ECO:0000255" key="1">
    <source>
        <dbReference type="HAMAP-Rule" id="MF_02108"/>
    </source>
</evidence>
<reference key="1">
    <citation type="journal article" date="2009" name="PLoS Genet.">
        <title>Organised genome dynamics in the Escherichia coli species results in highly diverse adaptive paths.</title>
        <authorList>
            <person name="Touchon M."/>
            <person name="Hoede C."/>
            <person name="Tenaillon O."/>
            <person name="Barbe V."/>
            <person name="Baeriswyl S."/>
            <person name="Bidet P."/>
            <person name="Bingen E."/>
            <person name="Bonacorsi S."/>
            <person name="Bouchier C."/>
            <person name="Bouvet O."/>
            <person name="Calteau A."/>
            <person name="Chiapello H."/>
            <person name="Clermont O."/>
            <person name="Cruveiller S."/>
            <person name="Danchin A."/>
            <person name="Diard M."/>
            <person name="Dossat C."/>
            <person name="Karoui M.E."/>
            <person name="Frapy E."/>
            <person name="Garry L."/>
            <person name="Ghigo J.M."/>
            <person name="Gilles A.M."/>
            <person name="Johnson J."/>
            <person name="Le Bouguenec C."/>
            <person name="Lescat M."/>
            <person name="Mangenot S."/>
            <person name="Martinez-Jehanne V."/>
            <person name="Matic I."/>
            <person name="Nassif X."/>
            <person name="Oztas S."/>
            <person name="Petit M.A."/>
            <person name="Pichon C."/>
            <person name="Rouy Z."/>
            <person name="Ruf C.S."/>
            <person name="Schneider D."/>
            <person name="Tourret J."/>
            <person name="Vacherie B."/>
            <person name="Vallenet D."/>
            <person name="Medigue C."/>
            <person name="Rocha E.P.C."/>
            <person name="Denamur E."/>
        </authorList>
    </citation>
    <scope>NUCLEOTIDE SEQUENCE [LARGE SCALE GENOMIC DNA]</scope>
    <source>
        <strain>UMN026 / ExPEC</strain>
    </source>
</reference>